<geneLocation type="chloroplast"/>
<accession>P28447</accession>
<feature type="chain" id="PRO_0000062581" description="Ribulose bisphosphate carboxylase large chain">
    <location>
        <begin position="1" status="less than"/>
        <end position="465"/>
    </location>
</feature>
<feature type="active site" description="Proton acceptor" evidence="1">
    <location>
        <position position="165"/>
    </location>
</feature>
<feature type="active site" description="Proton acceptor" evidence="1">
    <location>
        <position position="284"/>
    </location>
</feature>
<feature type="binding site" description="in homodimeric partner" evidence="1">
    <location>
        <position position="113"/>
    </location>
    <ligand>
        <name>substrate</name>
    </ligand>
</feature>
<feature type="binding site" evidence="1">
    <location>
        <position position="163"/>
    </location>
    <ligand>
        <name>substrate</name>
    </ligand>
</feature>
<feature type="binding site" evidence="1">
    <location>
        <position position="167"/>
    </location>
    <ligand>
        <name>substrate</name>
    </ligand>
</feature>
<feature type="binding site" description="via carbamate group" evidence="1">
    <location>
        <position position="191"/>
    </location>
    <ligand>
        <name>Mg(2+)</name>
        <dbReference type="ChEBI" id="CHEBI:18420"/>
    </ligand>
</feature>
<feature type="binding site" evidence="1">
    <location>
        <position position="193"/>
    </location>
    <ligand>
        <name>Mg(2+)</name>
        <dbReference type="ChEBI" id="CHEBI:18420"/>
    </ligand>
</feature>
<feature type="binding site" evidence="1">
    <location>
        <position position="194"/>
    </location>
    <ligand>
        <name>Mg(2+)</name>
        <dbReference type="ChEBI" id="CHEBI:18420"/>
    </ligand>
</feature>
<feature type="binding site" evidence="1">
    <location>
        <position position="285"/>
    </location>
    <ligand>
        <name>substrate</name>
    </ligand>
</feature>
<feature type="binding site" evidence="1">
    <location>
        <position position="317"/>
    </location>
    <ligand>
        <name>substrate</name>
    </ligand>
</feature>
<feature type="binding site" evidence="1">
    <location>
        <position position="369"/>
    </location>
    <ligand>
        <name>substrate</name>
    </ligand>
</feature>
<feature type="site" description="Transition state stabilizer" evidence="1">
    <location>
        <position position="324"/>
    </location>
</feature>
<feature type="modified residue" description="N6,N6,N6-trimethyllysine" evidence="1">
    <location>
        <position position="4"/>
    </location>
</feature>
<feature type="modified residue" description="N6-carboxylysine" evidence="1">
    <location>
        <position position="191"/>
    </location>
</feature>
<feature type="disulfide bond" description="Interchain; in linked form" evidence="1">
    <location>
        <position position="237"/>
    </location>
</feature>
<feature type="non-terminal residue">
    <location>
        <position position="1"/>
    </location>
</feature>
<keyword id="KW-0113">Calvin cycle</keyword>
<keyword id="KW-0120">Carbon dioxide fixation</keyword>
<keyword id="KW-0150">Chloroplast</keyword>
<keyword id="KW-1015">Disulfide bond</keyword>
<keyword id="KW-0456">Lyase</keyword>
<keyword id="KW-0460">Magnesium</keyword>
<keyword id="KW-0479">Metal-binding</keyword>
<keyword id="KW-0488">Methylation</keyword>
<keyword id="KW-0503">Monooxygenase</keyword>
<keyword id="KW-0560">Oxidoreductase</keyword>
<keyword id="KW-0601">Photorespiration</keyword>
<keyword id="KW-0602">Photosynthesis</keyword>
<keyword id="KW-0934">Plastid</keyword>
<dbReference type="EC" id="4.1.1.39" evidence="1"/>
<dbReference type="EMBL" id="L01949">
    <property type="protein sequence ID" value="AAA84584.2"/>
    <property type="molecule type" value="Genomic_DNA"/>
</dbReference>
<dbReference type="SMR" id="P28447"/>
<dbReference type="GO" id="GO:0009507">
    <property type="term" value="C:chloroplast"/>
    <property type="evidence" value="ECO:0007669"/>
    <property type="project" value="UniProtKB-SubCell"/>
</dbReference>
<dbReference type="GO" id="GO:0000287">
    <property type="term" value="F:magnesium ion binding"/>
    <property type="evidence" value="ECO:0007669"/>
    <property type="project" value="InterPro"/>
</dbReference>
<dbReference type="GO" id="GO:0004497">
    <property type="term" value="F:monooxygenase activity"/>
    <property type="evidence" value="ECO:0007669"/>
    <property type="project" value="UniProtKB-KW"/>
</dbReference>
<dbReference type="GO" id="GO:0016984">
    <property type="term" value="F:ribulose-bisphosphate carboxylase activity"/>
    <property type="evidence" value="ECO:0007669"/>
    <property type="project" value="UniProtKB-EC"/>
</dbReference>
<dbReference type="GO" id="GO:0009853">
    <property type="term" value="P:photorespiration"/>
    <property type="evidence" value="ECO:0007669"/>
    <property type="project" value="UniProtKB-KW"/>
</dbReference>
<dbReference type="GO" id="GO:0019253">
    <property type="term" value="P:reductive pentose-phosphate cycle"/>
    <property type="evidence" value="ECO:0007669"/>
    <property type="project" value="UniProtKB-KW"/>
</dbReference>
<dbReference type="CDD" id="cd08212">
    <property type="entry name" value="RuBisCO_large_I"/>
    <property type="match status" value="1"/>
</dbReference>
<dbReference type="FunFam" id="3.20.20.110:FF:000001">
    <property type="entry name" value="Ribulose bisphosphate carboxylase large chain"/>
    <property type="match status" value="1"/>
</dbReference>
<dbReference type="FunFam" id="3.30.70.150:FF:000001">
    <property type="entry name" value="Ribulose bisphosphate carboxylase large chain"/>
    <property type="match status" value="1"/>
</dbReference>
<dbReference type="Gene3D" id="3.20.20.110">
    <property type="entry name" value="Ribulose bisphosphate carboxylase, large subunit, C-terminal domain"/>
    <property type="match status" value="1"/>
</dbReference>
<dbReference type="Gene3D" id="3.30.70.150">
    <property type="entry name" value="RuBisCO large subunit, N-terminal domain"/>
    <property type="match status" value="1"/>
</dbReference>
<dbReference type="HAMAP" id="MF_01338">
    <property type="entry name" value="RuBisCO_L_type1"/>
    <property type="match status" value="1"/>
</dbReference>
<dbReference type="InterPro" id="IPR033966">
    <property type="entry name" value="RuBisCO"/>
</dbReference>
<dbReference type="InterPro" id="IPR020878">
    <property type="entry name" value="RuBisCo_large_chain_AS"/>
</dbReference>
<dbReference type="InterPro" id="IPR000685">
    <property type="entry name" value="RuBisCO_lsu_C"/>
</dbReference>
<dbReference type="InterPro" id="IPR036376">
    <property type="entry name" value="RuBisCO_lsu_C_sf"/>
</dbReference>
<dbReference type="InterPro" id="IPR017443">
    <property type="entry name" value="RuBisCO_lsu_fd_N"/>
</dbReference>
<dbReference type="InterPro" id="IPR036422">
    <property type="entry name" value="RuBisCO_lsu_N_sf"/>
</dbReference>
<dbReference type="InterPro" id="IPR020888">
    <property type="entry name" value="RuBisCO_lsuI"/>
</dbReference>
<dbReference type="NCBIfam" id="NF003252">
    <property type="entry name" value="PRK04208.1"/>
    <property type="match status" value="1"/>
</dbReference>
<dbReference type="PANTHER" id="PTHR42704">
    <property type="entry name" value="RIBULOSE BISPHOSPHATE CARBOXYLASE"/>
    <property type="match status" value="1"/>
</dbReference>
<dbReference type="PANTHER" id="PTHR42704:SF15">
    <property type="entry name" value="RIBULOSE BISPHOSPHATE CARBOXYLASE LARGE CHAIN"/>
    <property type="match status" value="1"/>
</dbReference>
<dbReference type="Pfam" id="PF00016">
    <property type="entry name" value="RuBisCO_large"/>
    <property type="match status" value="1"/>
</dbReference>
<dbReference type="Pfam" id="PF02788">
    <property type="entry name" value="RuBisCO_large_N"/>
    <property type="match status" value="1"/>
</dbReference>
<dbReference type="SFLD" id="SFLDG01052">
    <property type="entry name" value="RuBisCO"/>
    <property type="match status" value="1"/>
</dbReference>
<dbReference type="SFLD" id="SFLDS00014">
    <property type="entry name" value="RuBisCO"/>
    <property type="match status" value="1"/>
</dbReference>
<dbReference type="SFLD" id="SFLDG00301">
    <property type="entry name" value="RuBisCO-like_proteins"/>
    <property type="match status" value="1"/>
</dbReference>
<dbReference type="SUPFAM" id="SSF51649">
    <property type="entry name" value="RuBisCo, C-terminal domain"/>
    <property type="match status" value="1"/>
</dbReference>
<dbReference type="SUPFAM" id="SSF54966">
    <property type="entry name" value="RuBisCO, large subunit, small (N-terminal) domain"/>
    <property type="match status" value="1"/>
</dbReference>
<dbReference type="PROSITE" id="PS00157">
    <property type="entry name" value="RUBISCO_LARGE"/>
    <property type="match status" value="1"/>
</dbReference>
<proteinExistence type="inferred from homology"/>
<sequence>VGFKAGVKDYKLTYYTPNYETKDTDILAAFRVTPQPGVPPEEAGAAVAAESSTGTWTTVWTDGLTSLDRYKGRCYHIEPVPGDENQYIAYVAYPLDLFEEGSVTNMFTSIVGNVFGFKALRALRLEDLRIPAAYAKTFQGPPHGIQVERDKLNKYGRPLLGCTIKPKLGLSAKNYGRAVYECLRGGLDFTKDDENVNSQPFMRWRDRFLFCAEAIYKAQAETGEIKGHYLNATAGTCEEMMKRAVFARELGVPIVMHDYLTGGFTANTSLAEYCRDNGLLLHIHRAMHAVIDRQKNHGIHFRVLAKALRMSGGDHIHAGTVVGKLEGEREITLGFVDLLRDDYIEKDRGRGIYFSQDWVSLPGVLPVASGGIHVWHMPALTEIFGDDSVLQFGGGTLGHPWGNAPGAVANRVALEACVQARNEGRDLAREGNEIIREAGQWSNELSAACAIWKEIKFEFPAMDTL</sequence>
<organism>
    <name type="scientific">Rhododendron hippophaeoides</name>
    <name type="common">Rhododendron</name>
    <dbReference type="NCBI Taxonomy" id="4347"/>
    <lineage>
        <taxon>Eukaryota</taxon>
        <taxon>Viridiplantae</taxon>
        <taxon>Streptophyta</taxon>
        <taxon>Embryophyta</taxon>
        <taxon>Tracheophyta</taxon>
        <taxon>Spermatophyta</taxon>
        <taxon>Magnoliopsida</taxon>
        <taxon>eudicotyledons</taxon>
        <taxon>Gunneridae</taxon>
        <taxon>Pentapetalae</taxon>
        <taxon>asterids</taxon>
        <taxon>Ericales</taxon>
        <taxon>Ericaceae</taxon>
        <taxon>Ericoideae</taxon>
        <taxon>Rhodoreae</taxon>
        <taxon>Rhododendron</taxon>
    </lineage>
</organism>
<gene>
    <name evidence="1" type="primary">rbcL</name>
</gene>
<protein>
    <recommendedName>
        <fullName evidence="1">Ribulose bisphosphate carboxylase large chain</fullName>
        <shortName evidence="1">RuBisCO large subunit</shortName>
        <ecNumber evidence="1">4.1.1.39</ecNumber>
    </recommendedName>
</protein>
<reference key="1">
    <citation type="journal article" date="1992" name="Science">
        <title>Carnivorous plants: phylogeny and structural evolution.</title>
        <authorList>
            <person name="Albert V.A."/>
            <person name="Williams S.E."/>
            <person name="Chase M.W."/>
        </authorList>
    </citation>
    <scope>NUCLEOTIDE SEQUENCE [GENOMIC DNA]</scope>
</reference>
<evidence type="ECO:0000255" key="1">
    <source>
        <dbReference type="HAMAP-Rule" id="MF_01338"/>
    </source>
</evidence>
<name>RBL_RHOHI</name>
<comment type="function">
    <text evidence="1">RuBisCO catalyzes two reactions: the carboxylation of D-ribulose 1,5-bisphosphate, the primary event in carbon dioxide fixation, as well as the oxidative fragmentation of the pentose substrate in the photorespiration process. Both reactions occur simultaneously and in competition at the same active site.</text>
</comment>
<comment type="catalytic activity">
    <reaction evidence="1">
        <text>2 (2R)-3-phosphoglycerate + 2 H(+) = D-ribulose 1,5-bisphosphate + CO2 + H2O</text>
        <dbReference type="Rhea" id="RHEA:23124"/>
        <dbReference type="ChEBI" id="CHEBI:15377"/>
        <dbReference type="ChEBI" id="CHEBI:15378"/>
        <dbReference type="ChEBI" id="CHEBI:16526"/>
        <dbReference type="ChEBI" id="CHEBI:57870"/>
        <dbReference type="ChEBI" id="CHEBI:58272"/>
        <dbReference type="EC" id="4.1.1.39"/>
    </reaction>
</comment>
<comment type="catalytic activity">
    <reaction evidence="1">
        <text>D-ribulose 1,5-bisphosphate + O2 = 2-phosphoglycolate + (2R)-3-phosphoglycerate + 2 H(+)</text>
        <dbReference type="Rhea" id="RHEA:36631"/>
        <dbReference type="ChEBI" id="CHEBI:15378"/>
        <dbReference type="ChEBI" id="CHEBI:15379"/>
        <dbReference type="ChEBI" id="CHEBI:57870"/>
        <dbReference type="ChEBI" id="CHEBI:58033"/>
        <dbReference type="ChEBI" id="CHEBI:58272"/>
    </reaction>
</comment>
<comment type="cofactor">
    <cofactor evidence="1">
        <name>Mg(2+)</name>
        <dbReference type="ChEBI" id="CHEBI:18420"/>
    </cofactor>
    <text evidence="1">Binds 1 Mg(2+) ion per subunit.</text>
</comment>
<comment type="subunit">
    <text evidence="1">Heterohexadecamer of 8 large chains and 8 small chains; disulfide-linked. The disulfide link is formed within the large subunit homodimers.</text>
</comment>
<comment type="subcellular location">
    <subcellularLocation>
        <location>Plastid</location>
        <location>Chloroplast</location>
    </subcellularLocation>
</comment>
<comment type="PTM">
    <text evidence="1">The disulfide bond which can form in the large chain dimeric partners within the hexadecamer appears to be associated with oxidative stress and protein turnover.</text>
</comment>
<comment type="miscellaneous">
    <text evidence="1">The basic functional RuBisCO is composed of a large chain homodimer in a 'head-to-tail' conformation. In form I RuBisCO this homodimer is arranged in a barrel-like tetramer with the small subunits forming a tetrameric 'cap' on each end of the 'barrel'.</text>
</comment>
<comment type="similarity">
    <text evidence="1">Belongs to the RuBisCO large chain family. Type I subfamily.</text>
</comment>